<keyword id="KW-0025">Alternative splicing</keyword>
<keyword id="KW-0963">Cytoplasm</keyword>
<keyword id="KW-0539">Nucleus</keyword>
<keyword id="KW-1267">Proteomics identification</keyword>
<keyword id="KW-1185">Reference proteome</keyword>
<name>BAFL_HUMAN</name>
<gene>
    <name type="primary">BANF2</name>
    <name type="synonym">BAFL</name>
    <name type="synonym">C20orf179</name>
</gene>
<protein>
    <recommendedName>
        <fullName>Barrier-to-autointegration factor-like protein</fullName>
        <shortName>BAF-L</shortName>
    </recommendedName>
    <alternativeName>
        <fullName>Barrier-to-autointegration factor 2</fullName>
    </alternativeName>
</protein>
<dbReference type="EMBL" id="AW022487">
    <property type="status" value="NOT_ANNOTATED_CDS"/>
    <property type="molecule type" value="mRNA"/>
</dbReference>
<dbReference type="EMBL" id="AL132765">
    <property type="status" value="NOT_ANNOTATED_CDS"/>
    <property type="molecule type" value="Genomic_DNA"/>
</dbReference>
<dbReference type="EMBL" id="AL160071">
    <property type="status" value="NOT_ANNOTATED_CDS"/>
    <property type="molecule type" value="Genomic_DNA"/>
</dbReference>
<dbReference type="EMBL" id="CH471133">
    <property type="protein sequence ID" value="EAX10271.1"/>
    <property type="molecule type" value="Genomic_DNA"/>
</dbReference>
<dbReference type="EMBL" id="CH471133">
    <property type="protein sequence ID" value="EAX10272.1"/>
    <property type="molecule type" value="Genomic_DNA"/>
</dbReference>
<dbReference type="EMBL" id="BC054871">
    <property type="protein sequence ID" value="AAH54871.1"/>
    <property type="molecule type" value="mRNA"/>
</dbReference>
<dbReference type="EMBL" id="BC062735">
    <property type="protein sequence ID" value="AAH62735.1"/>
    <property type="molecule type" value="mRNA"/>
</dbReference>
<dbReference type="CCDS" id="CCDS13129.1">
    <molecule id="Q9H503-1"/>
</dbReference>
<dbReference type="CCDS" id="CCDS54449.1">
    <molecule id="Q9H503-2"/>
</dbReference>
<dbReference type="RefSeq" id="NP_001014977.2">
    <molecule id="Q9H503-1"/>
    <property type="nucleotide sequence ID" value="NM_001014977.4"/>
</dbReference>
<dbReference type="RefSeq" id="NP_001152967.1">
    <molecule id="Q9H503-2"/>
    <property type="nucleotide sequence ID" value="NM_001159495.2"/>
</dbReference>
<dbReference type="RefSeq" id="NP_848572.3">
    <molecule id="Q9H503-1"/>
    <property type="nucleotide sequence ID" value="NM_178477.5"/>
</dbReference>
<dbReference type="RefSeq" id="XP_005260725.1">
    <molecule id="Q9H503-1"/>
    <property type="nucleotide sequence ID" value="XM_005260668.4"/>
</dbReference>
<dbReference type="SMR" id="Q9H503"/>
<dbReference type="BioGRID" id="126728">
    <property type="interactions" value="23"/>
</dbReference>
<dbReference type="CORUM" id="Q9H503"/>
<dbReference type="FunCoup" id="Q9H503">
    <property type="interactions" value="158"/>
</dbReference>
<dbReference type="IntAct" id="Q9H503">
    <property type="interactions" value="20"/>
</dbReference>
<dbReference type="STRING" id="9606.ENSP00000439128"/>
<dbReference type="iPTMnet" id="Q9H503"/>
<dbReference type="PhosphoSitePlus" id="Q9H503"/>
<dbReference type="BioMuta" id="BANF2"/>
<dbReference type="jPOST" id="Q9H503"/>
<dbReference type="MassIVE" id="Q9H503"/>
<dbReference type="PaxDb" id="9606-ENSP00000439128"/>
<dbReference type="PeptideAtlas" id="Q9H503"/>
<dbReference type="ProteomicsDB" id="26258"/>
<dbReference type="ProteomicsDB" id="80887">
    <molecule id="Q9H503-1"/>
</dbReference>
<dbReference type="Antibodypedia" id="48602">
    <property type="antibodies" value="19 antibodies from 9 providers"/>
</dbReference>
<dbReference type="DNASU" id="140836"/>
<dbReference type="Ensembl" id="ENST00000246090.6">
    <molecule id="Q9H503-1"/>
    <property type="protein sequence ID" value="ENSP00000246090.5"/>
    <property type="gene ID" value="ENSG00000125888.15"/>
</dbReference>
<dbReference type="Ensembl" id="ENST00000377805.7">
    <molecule id="Q9H503-1"/>
    <property type="protein sequence ID" value="ENSP00000367036.3"/>
    <property type="gene ID" value="ENSG00000125888.15"/>
</dbReference>
<dbReference type="Ensembl" id="ENST00000545418.2">
    <molecule id="Q9H503-2"/>
    <property type="protein sequence ID" value="ENSP00000439128.1"/>
    <property type="gene ID" value="ENSG00000125888.15"/>
</dbReference>
<dbReference type="GeneID" id="140836"/>
<dbReference type="KEGG" id="hsa:140836"/>
<dbReference type="MANE-Select" id="ENST00000246090.6">
    <property type="protein sequence ID" value="ENSP00000246090.5"/>
    <property type="RefSeq nucleotide sequence ID" value="NM_178477.5"/>
    <property type="RefSeq protein sequence ID" value="NP_848572.3"/>
</dbReference>
<dbReference type="UCSC" id="uc002wpz.3">
    <molecule id="Q9H503-1"/>
    <property type="organism name" value="human"/>
</dbReference>
<dbReference type="AGR" id="HGNC:16172"/>
<dbReference type="CTD" id="140836"/>
<dbReference type="DisGeNET" id="140836"/>
<dbReference type="GeneCards" id="BANF2"/>
<dbReference type="HGNC" id="HGNC:16172">
    <property type="gene designation" value="BANF2"/>
</dbReference>
<dbReference type="HPA" id="ENSG00000125888">
    <property type="expression patterns" value="Tissue enriched (testis)"/>
</dbReference>
<dbReference type="neXtProt" id="NX_Q9H503"/>
<dbReference type="OpenTargets" id="ENSG00000125888"/>
<dbReference type="PharmGKB" id="PA162377348"/>
<dbReference type="VEuPathDB" id="HostDB:ENSG00000125888"/>
<dbReference type="eggNOG" id="KOG4233">
    <property type="taxonomic scope" value="Eukaryota"/>
</dbReference>
<dbReference type="GeneTree" id="ENSGT00940000162003"/>
<dbReference type="HOGENOM" id="CLU_167806_0_0_1"/>
<dbReference type="InParanoid" id="Q9H503"/>
<dbReference type="OMA" id="KWIICCC"/>
<dbReference type="OrthoDB" id="9997163at2759"/>
<dbReference type="PAN-GO" id="Q9H503">
    <property type="GO annotations" value="4 GO annotations based on evolutionary models"/>
</dbReference>
<dbReference type="PhylomeDB" id="Q9H503"/>
<dbReference type="TreeFam" id="TF315060"/>
<dbReference type="PathwayCommons" id="Q9H503"/>
<dbReference type="SignaLink" id="Q9H503"/>
<dbReference type="BioGRID-ORCS" id="140836">
    <property type="hits" value="14 hits in 1140 CRISPR screens"/>
</dbReference>
<dbReference type="GenomeRNAi" id="140836"/>
<dbReference type="Pharos" id="Q9H503">
    <property type="development level" value="Tdark"/>
</dbReference>
<dbReference type="PRO" id="PR:Q9H503"/>
<dbReference type="Proteomes" id="UP000005640">
    <property type="component" value="Chromosome 20"/>
</dbReference>
<dbReference type="RNAct" id="Q9H503">
    <property type="molecule type" value="protein"/>
</dbReference>
<dbReference type="Bgee" id="ENSG00000125888">
    <property type="expression patterns" value="Expressed in left testis and 101 other cell types or tissues"/>
</dbReference>
<dbReference type="ExpressionAtlas" id="Q9H503">
    <property type="expression patterns" value="baseline and differential"/>
</dbReference>
<dbReference type="GO" id="GO:0000793">
    <property type="term" value="C:condensed chromosome"/>
    <property type="evidence" value="ECO:0000318"/>
    <property type="project" value="GO_Central"/>
</dbReference>
<dbReference type="GO" id="GO:0005737">
    <property type="term" value="C:cytoplasm"/>
    <property type="evidence" value="ECO:0007669"/>
    <property type="project" value="UniProtKB-SubCell"/>
</dbReference>
<dbReference type="GO" id="GO:0005634">
    <property type="term" value="C:nucleus"/>
    <property type="evidence" value="ECO:0007005"/>
    <property type="project" value="UniProtKB"/>
</dbReference>
<dbReference type="GO" id="GO:0003677">
    <property type="term" value="F:DNA binding"/>
    <property type="evidence" value="ECO:0000318"/>
    <property type="project" value="GO_Central"/>
</dbReference>
<dbReference type="GO" id="GO:0042802">
    <property type="term" value="F:identical protein binding"/>
    <property type="evidence" value="ECO:0000353"/>
    <property type="project" value="IntAct"/>
</dbReference>
<dbReference type="GO" id="GO:0051276">
    <property type="term" value="P:chromosome organization"/>
    <property type="evidence" value="ECO:0000318"/>
    <property type="project" value="GO_Central"/>
</dbReference>
<dbReference type="FunFam" id="1.10.150.40:FF:000002">
    <property type="entry name" value="Barrier to autointegration factor 2"/>
    <property type="match status" value="1"/>
</dbReference>
<dbReference type="Gene3D" id="1.10.150.40">
    <property type="entry name" value="Barrier-to-autointegration factor, BAF"/>
    <property type="match status" value="1"/>
</dbReference>
<dbReference type="InterPro" id="IPR051387">
    <property type="entry name" value="BAF"/>
</dbReference>
<dbReference type="InterPro" id="IPR004122">
    <property type="entry name" value="BAF_prot"/>
</dbReference>
<dbReference type="InterPro" id="IPR036617">
    <property type="entry name" value="BAF_sf"/>
</dbReference>
<dbReference type="PANTHER" id="PTHR47507">
    <property type="entry name" value="BARRIER TO AUTOINTEGRATION FACTOR 2"/>
    <property type="match status" value="1"/>
</dbReference>
<dbReference type="PANTHER" id="PTHR47507:SF4">
    <property type="entry name" value="BARRIER-TO-AUTOINTEGRATION FACTOR-LIKE PROTEIN"/>
    <property type="match status" value="1"/>
</dbReference>
<dbReference type="Pfam" id="PF02961">
    <property type="entry name" value="SAM_BAF"/>
    <property type="match status" value="1"/>
</dbReference>
<dbReference type="SMART" id="SM01023">
    <property type="entry name" value="BAF"/>
    <property type="match status" value="1"/>
</dbReference>
<dbReference type="SUPFAM" id="SSF47798">
    <property type="entry name" value="Barrier-to-autointegration factor, BAF"/>
    <property type="match status" value="1"/>
</dbReference>
<accession>Q9H503</accession>
<accession>D3DW25</accession>
<accession>F5H3F6</accession>
<accession>Q7Z4M6</accession>
<feature type="chain" id="PRO_0000221030" description="Barrier-to-autointegration factor-like protein">
    <location>
        <begin position="1"/>
        <end position="90"/>
    </location>
</feature>
<feature type="splice variant" id="VSP_046080" description="In isoform 2." evidence="2">
    <original>M</original>
    <variation>MLRGTKEM</variation>
    <location>
        <position position="1"/>
    </location>
</feature>
<feature type="sequence variant" id="VAR_024372" description="In dbSNP:rs4814640." evidence="1">
    <original>N</original>
    <variation>D</variation>
    <location>
        <position position="3"/>
    </location>
</feature>
<feature type="sequence variant" id="VAR_013693" description="In dbSNP:rs1053993.">
    <original>T</original>
    <variation>S</variation>
    <location>
        <position position="78"/>
    </location>
</feature>
<evidence type="ECO:0000269" key="1">
    <source ref="3"/>
</evidence>
<evidence type="ECO:0000303" key="2">
    <source>
    </source>
</evidence>
<evidence type="ECO:0000305" key="3"/>
<reference key="1">
    <citation type="journal article" date="1994" name="Genomics">
        <title>Isolation of novel and known genes from a human fetal cochlear cDNA library using subtractive hybridization and differential screening.</title>
        <authorList>
            <person name="Robertson N.G."/>
            <person name="Khetarpal U."/>
            <person name="Gutierrez-Espeleta G.A."/>
            <person name="Bieber F.R."/>
            <person name="Morton C.C."/>
        </authorList>
    </citation>
    <scope>NUCLEOTIDE SEQUENCE [LARGE SCALE MRNA] (ISOFORM 2)</scope>
</reference>
<reference key="2">
    <citation type="journal article" date="2001" name="Nature">
        <title>The DNA sequence and comparative analysis of human chromosome 20.</title>
        <authorList>
            <person name="Deloukas P."/>
            <person name="Matthews L.H."/>
            <person name="Ashurst J.L."/>
            <person name="Burton J."/>
            <person name="Gilbert J.G.R."/>
            <person name="Jones M."/>
            <person name="Stavrides G."/>
            <person name="Almeida J.P."/>
            <person name="Babbage A.K."/>
            <person name="Bagguley C.L."/>
            <person name="Bailey J."/>
            <person name="Barlow K.F."/>
            <person name="Bates K.N."/>
            <person name="Beard L.M."/>
            <person name="Beare D.M."/>
            <person name="Beasley O.P."/>
            <person name="Bird C.P."/>
            <person name="Blakey S.E."/>
            <person name="Bridgeman A.M."/>
            <person name="Brown A.J."/>
            <person name="Buck D."/>
            <person name="Burrill W.D."/>
            <person name="Butler A.P."/>
            <person name="Carder C."/>
            <person name="Carter N.P."/>
            <person name="Chapman J.C."/>
            <person name="Clamp M."/>
            <person name="Clark G."/>
            <person name="Clark L.N."/>
            <person name="Clark S.Y."/>
            <person name="Clee C.M."/>
            <person name="Clegg S."/>
            <person name="Cobley V.E."/>
            <person name="Collier R.E."/>
            <person name="Connor R.E."/>
            <person name="Corby N.R."/>
            <person name="Coulson A."/>
            <person name="Coville G.J."/>
            <person name="Deadman R."/>
            <person name="Dhami P.D."/>
            <person name="Dunn M."/>
            <person name="Ellington A.G."/>
            <person name="Frankland J.A."/>
            <person name="Fraser A."/>
            <person name="French L."/>
            <person name="Garner P."/>
            <person name="Grafham D.V."/>
            <person name="Griffiths C."/>
            <person name="Griffiths M.N.D."/>
            <person name="Gwilliam R."/>
            <person name="Hall R.E."/>
            <person name="Hammond S."/>
            <person name="Harley J.L."/>
            <person name="Heath P.D."/>
            <person name="Ho S."/>
            <person name="Holden J.L."/>
            <person name="Howden P.J."/>
            <person name="Huckle E."/>
            <person name="Hunt A.R."/>
            <person name="Hunt S.E."/>
            <person name="Jekosch K."/>
            <person name="Johnson C.M."/>
            <person name="Johnson D."/>
            <person name="Kay M.P."/>
            <person name="Kimberley A.M."/>
            <person name="King A."/>
            <person name="Knights A."/>
            <person name="Laird G.K."/>
            <person name="Lawlor S."/>
            <person name="Lehvaeslaiho M.H."/>
            <person name="Leversha M.A."/>
            <person name="Lloyd C."/>
            <person name="Lloyd D.M."/>
            <person name="Lovell J.D."/>
            <person name="Marsh V.L."/>
            <person name="Martin S.L."/>
            <person name="McConnachie L.J."/>
            <person name="McLay K."/>
            <person name="McMurray A.A."/>
            <person name="Milne S.A."/>
            <person name="Mistry D."/>
            <person name="Moore M.J.F."/>
            <person name="Mullikin J.C."/>
            <person name="Nickerson T."/>
            <person name="Oliver K."/>
            <person name="Parker A."/>
            <person name="Patel R."/>
            <person name="Pearce T.A.V."/>
            <person name="Peck A.I."/>
            <person name="Phillimore B.J.C.T."/>
            <person name="Prathalingam S.R."/>
            <person name="Plumb R.W."/>
            <person name="Ramsay H."/>
            <person name="Rice C.M."/>
            <person name="Ross M.T."/>
            <person name="Scott C.E."/>
            <person name="Sehra H.K."/>
            <person name="Shownkeen R."/>
            <person name="Sims S."/>
            <person name="Skuce C.D."/>
            <person name="Smith M.L."/>
            <person name="Soderlund C."/>
            <person name="Steward C.A."/>
            <person name="Sulston J.E."/>
            <person name="Swann R.M."/>
            <person name="Sycamore N."/>
            <person name="Taylor R."/>
            <person name="Tee L."/>
            <person name="Thomas D.W."/>
            <person name="Thorpe A."/>
            <person name="Tracey A."/>
            <person name="Tromans A.C."/>
            <person name="Vaudin M."/>
            <person name="Wall M."/>
            <person name="Wallis J.M."/>
            <person name="Whitehead S.L."/>
            <person name="Whittaker P."/>
            <person name="Willey D.L."/>
            <person name="Williams L."/>
            <person name="Williams S.A."/>
            <person name="Wilming L."/>
            <person name="Wray P.W."/>
            <person name="Hubbard T."/>
            <person name="Durbin R.M."/>
            <person name="Bentley D.R."/>
            <person name="Beck S."/>
            <person name="Rogers J."/>
        </authorList>
    </citation>
    <scope>NUCLEOTIDE SEQUENCE [LARGE SCALE GENOMIC DNA]</scope>
</reference>
<reference key="3">
    <citation type="submission" date="2005-09" db="EMBL/GenBank/DDBJ databases">
        <authorList>
            <person name="Mural R.J."/>
            <person name="Istrail S."/>
            <person name="Sutton G.G."/>
            <person name="Florea L."/>
            <person name="Halpern A.L."/>
            <person name="Mobarry C.M."/>
            <person name="Lippert R."/>
            <person name="Walenz B."/>
            <person name="Shatkay H."/>
            <person name="Dew I."/>
            <person name="Miller J.R."/>
            <person name="Flanigan M.J."/>
            <person name="Edwards N.J."/>
            <person name="Bolanos R."/>
            <person name="Fasulo D."/>
            <person name="Halldorsson B.V."/>
            <person name="Hannenhalli S."/>
            <person name="Turner R."/>
            <person name="Yooseph S."/>
            <person name="Lu F."/>
            <person name="Nusskern D.R."/>
            <person name="Shue B.C."/>
            <person name="Zheng X.H."/>
            <person name="Zhong F."/>
            <person name="Delcher A.L."/>
            <person name="Huson D.H."/>
            <person name="Kravitz S.A."/>
            <person name="Mouchard L."/>
            <person name="Reinert K."/>
            <person name="Remington K.A."/>
            <person name="Clark A.G."/>
            <person name="Waterman M.S."/>
            <person name="Eichler E.E."/>
            <person name="Adams M.D."/>
            <person name="Hunkapiller M.W."/>
            <person name="Myers E.W."/>
            <person name="Venter J.C."/>
        </authorList>
    </citation>
    <scope>NUCLEOTIDE SEQUENCE [LARGE SCALE GENOMIC DNA]</scope>
    <scope>VARIANT ASP-3</scope>
</reference>
<reference key="4">
    <citation type="journal article" date="2004" name="Genome Res.">
        <title>The status, quality, and expansion of the NIH full-length cDNA project: the Mammalian Gene Collection (MGC).</title>
        <authorList>
            <consortium name="The MGC Project Team"/>
        </authorList>
    </citation>
    <scope>NUCLEOTIDE SEQUENCE [LARGE SCALE MRNA] (ISOFORM 1)</scope>
    <source>
        <tissue>Testis</tissue>
    </source>
</reference>
<reference key="5">
    <citation type="journal article" date="2006" name="Exp. Cell Res.">
        <title>Barrier-to-autointegration factor-like (BAF-L): a proposed regulator of BAF.</title>
        <authorList>
            <person name="Tifft K.E."/>
            <person name="Segura-Totten M."/>
            <person name="Lee K.K."/>
            <person name="Wilson K.L."/>
        </authorList>
    </citation>
    <scope>CHARACTERIZATION</scope>
    <scope>INTERACTION WITH BANF1</scope>
</reference>
<organism>
    <name type="scientific">Homo sapiens</name>
    <name type="common">Human</name>
    <dbReference type="NCBI Taxonomy" id="9606"/>
    <lineage>
        <taxon>Eukaryota</taxon>
        <taxon>Metazoa</taxon>
        <taxon>Chordata</taxon>
        <taxon>Craniata</taxon>
        <taxon>Vertebrata</taxon>
        <taxon>Euteleostomi</taxon>
        <taxon>Mammalia</taxon>
        <taxon>Eutheria</taxon>
        <taxon>Euarchontoglires</taxon>
        <taxon>Primates</taxon>
        <taxon>Haplorrhini</taxon>
        <taxon>Catarrhini</taxon>
        <taxon>Hominidae</taxon>
        <taxon>Homo</taxon>
    </lineage>
</organism>
<comment type="function">
    <text>May play a role in BANF1 regulation and influence tissue-specific roles of BANF1.</text>
</comment>
<comment type="subunit">
    <text>Homodimer. Heterodimerizes with BANF1.</text>
</comment>
<comment type="interaction">
    <interactant intactId="EBI-11977289">
        <id>Q9H503-2</id>
    </interactant>
    <interactant intactId="EBI-10173507">
        <id>Q6UY14-3</id>
        <label>ADAMTSL4</label>
    </interactant>
    <organismsDiffer>false</organismsDiffer>
    <experiments>3</experiments>
</comment>
<comment type="interaction">
    <interactant intactId="EBI-11977289">
        <id>Q9H503-2</id>
    </interactant>
    <interactant intactId="EBI-1055977">
        <id>O75531</id>
        <label>BANF1</label>
    </interactant>
    <organismsDiffer>false</organismsDiffer>
    <experiments>3</experiments>
</comment>
<comment type="interaction">
    <interactant intactId="EBI-11977289">
        <id>Q9H503-2</id>
    </interactant>
    <interactant intactId="EBI-11977289">
        <id>Q9H503-2</id>
        <label>BANF2</label>
    </interactant>
    <organismsDiffer>false</organismsDiffer>
    <experiments>3</experiments>
</comment>
<comment type="interaction">
    <interactant intactId="EBI-11977289">
        <id>Q9H503-2</id>
    </interactant>
    <interactant intactId="EBI-10181188">
        <id>Q8N7W2-2</id>
        <label>BEND7</label>
    </interactant>
    <organismsDiffer>false</organismsDiffer>
    <experiments>3</experiments>
</comment>
<comment type="interaction">
    <interactant intactId="EBI-11977289">
        <id>Q9H503-2</id>
    </interactant>
    <interactant intactId="EBI-9038570">
        <id>P27918</id>
        <label>CFP</label>
    </interactant>
    <organismsDiffer>false</organismsDiffer>
    <experiments>3</experiments>
</comment>
<comment type="interaction">
    <interactant intactId="EBI-11977289">
        <id>Q9H503-2</id>
    </interactant>
    <interactant intactId="EBI-748171">
        <id>O43186</id>
        <label>CRX</label>
    </interactant>
    <organismsDiffer>false</organismsDiffer>
    <experiments>3</experiments>
</comment>
<comment type="interaction">
    <interactant intactId="EBI-11977289">
        <id>Q9H503-2</id>
    </interactant>
    <interactant intactId="EBI-7043337">
        <id>P05813</id>
        <label>CRYBA1</label>
    </interactant>
    <organismsDiffer>false</organismsDiffer>
    <experiments>3</experiments>
</comment>
<comment type="interaction">
    <interactant intactId="EBI-11977289">
        <id>Q9H503-2</id>
    </interactant>
    <interactant intactId="EBI-742054">
        <id>Q96D03</id>
        <label>DDIT4L</label>
    </interactant>
    <organismsDiffer>false</organismsDiffer>
    <experiments>3</experiments>
</comment>
<comment type="interaction">
    <interactant intactId="EBI-11977289">
        <id>Q9H503-2</id>
    </interactant>
    <interactant intactId="EBI-9381887">
        <id>Q8WXU2-2</id>
        <label>DNAAF4</label>
    </interactant>
    <organismsDiffer>false</organismsDiffer>
    <experiments>3</experiments>
</comment>
<comment type="interaction">
    <interactant intactId="EBI-11977289">
        <id>Q9H503-2</id>
    </interactant>
    <interactant intactId="EBI-724940">
        <id>Q9BVJ7</id>
        <label>DUSP23</label>
    </interactant>
    <organismsDiffer>false</organismsDiffer>
    <experiments>3</experiments>
</comment>
<comment type="interaction">
    <interactant intactId="EBI-11977289">
        <id>Q9H503-2</id>
    </interactant>
    <interactant intactId="EBI-6509505">
        <id>Q0VD86</id>
        <label>INCA1</label>
    </interactant>
    <organismsDiffer>false</organismsDiffer>
    <experiments>3</experiments>
</comment>
<comment type="interaction">
    <interactant intactId="EBI-11977289">
        <id>Q9H503-2</id>
    </interactant>
    <interactant intactId="EBI-11522433">
        <id>Q5JR59-3</id>
        <label>MTUS2</label>
    </interactant>
    <organismsDiffer>false</organismsDiffer>
    <experiments>3</experiments>
</comment>
<comment type="interaction">
    <interactant intactId="EBI-11977289">
        <id>Q9H503-2</id>
    </interactant>
    <interactant intactId="EBI-741158">
        <id>Q96HA8</id>
        <label>NTAQ1</label>
    </interactant>
    <organismsDiffer>false</organismsDiffer>
    <experiments>3</experiments>
</comment>
<comment type="interaction">
    <interactant intactId="EBI-11977289">
        <id>Q9H503-2</id>
    </interactant>
    <interactant intactId="EBI-11320284">
        <id>Q9NQX0</id>
        <label>PRDM6</label>
    </interactant>
    <organismsDiffer>false</organismsDiffer>
    <experiments>3</experiments>
</comment>
<comment type="interaction">
    <interactant intactId="EBI-11977289">
        <id>Q9H503-2</id>
    </interactant>
    <interactant intactId="EBI-359352">
        <id>P25786</id>
        <label>PSMA1</label>
    </interactant>
    <organismsDiffer>false</organismsDiffer>
    <experiments>6</experiments>
</comment>
<comment type="interaction">
    <interactant intactId="EBI-11977289">
        <id>Q9H503-2</id>
    </interactant>
    <interactant intactId="EBI-748601">
        <id>Q9UHV2</id>
        <label>SERTAD1</label>
    </interactant>
    <organismsDiffer>false</organismsDiffer>
    <experiments>3</experiments>
</comment>
<comment type="interaction">
    <interactant intactId="EBI-11977289">
        <id>Q9H503-2</id>
    </interactant>
    <interactant intactId="EBI-13636688">
        <id>P15884-3</id>
        <label>TCF4</label>
    </interactant>
    <organismsDiffer>false</organismsDiffer>
    <experiments>3</experiments>
</comment>
<comment type="subcellular location">
    <subcellularLocation>
        <location>Nucleus</location>
    </subcellularLocation>
    <subcellularLocation>
        <location>Cytoplasm</location>
    </subcellularLocation>
</comment>
<comment type="alternative products">
    <event type="alternative splicing"/>
    <isoform>
        <id>Q9H503-1</id>
        <name>1</name>
        <sequence type="displayed"/>
    </isoform>
    <isoform>
        <id>Q9H503-2</id>
        <name>2</name>
        <sequence type="described" ref="VSP_046080"/>
    </isoform>
</comment>
<comment type="tissue specificity">
    <text>Expressed strongly in testis and pancreas. Also detected in brain, colon, liver, lung, ovary, placenta, prostate, small intestine, spleen and thymus. Not detected in heart, kidney and skeletal muscle.</text>
</comment>
<comment type="similarity">
    <text evidence="3">Belongs to the BAF family.</text>
</comment>
<comment type="caution">
    <text evidence="3">In contrast to BANF1, it does not seem to bind DNA.</text>
</comment>
<proteinExistence type="evidence at protein level"/>
<sequence length="90" mass="10309">MDNMSPRLRAFLSEPIGEKDVCWVDGISHELAINLVTKGINKAYILLGQFLLMHKNEAEFQRWLICCFGATECEAQQTSHCLKEWCACFL</sequence>